<accession>Q6G3K5</accession>
<gene>
    <name evidence="1" type="primary">plsX</name>
    <name type="ordered locus">BH07620</name>
</gene>
<proteinExistence type="inferred from homology"/>
<comment type="function">
    <text evidence="1">Catalyzes the reversible formation of acyl-phosphate (acyl-PO(4)) from acyl-[acyl-carrier-protein] (acyl-ACP). This enzyme utilizes acyl-ACP as fatty acyl donor, but not acyl-CoA.</text>
</comment>
<comment type="catalytic activity">
    <reaction evidence="1">
        <text>a fatty acyl-[ACP] + phosphate = an acyl phosphate + holo-[ACP]</text>
        <dbReference type="Rhea" id="RHEA:42292"/>
        <dbReference type="Rhea" id="RHEA-COMP:9685"/>
        <dbReference type="Rhea" id="RHEA-COMP:14125"/>
        <dbReference type="ChEBI" id="CHEBI:43474"/>
        <dbReference type="ChEBI" id="CHEBI:59918"/>
        <dbReference type="ChEBI" id="CHEBI:64479"/>
        <dbReference type="ChEBI" id="CHEBI:138651"/>
        <dbReference type="EC" id="2.3.1.274"/>
    </reaction>
</comment>
<comment type="pathway">
    <text evidence="1">Lipid metabolism; phospholipid metabolism.</text>
</comment>
<comment type="subunit">
    <text evidence="1">Homodimer. Probably interacts with PlsY.</text>
</comment>
<comment type="subcellular location">
    <subcellularLocation>
        <location evidence="1">Cytoplasm</location>
    </subcellularLocation>
    <text evidence="1">Associated with the membrane possibly through PlsY.</text>
</comment>
<comment type="similarity">
    <text evidence="1">Belongs to the PlsX family.</text>
</comment>
<feature type="chain" id="PRO_0000189848" description="Phosphate acyltransferase">
    <location>
        <begin position="1"/>
        <end position="356"/>
    </location>
</feature>
<reference key="1">
    <citation type="journal article" date="2004" name="Proc. Natl. Acad. Sci. U.S.A.">
        <title>The louse-borne human pathogen Bartonella quintana is a genomic derivative of the zoonotic agent Bartonella henselae.</title>
        <authorList>
            <person name="Alsmark U.C.M."/>
            <person name="Frank A.C."/>
            <person name="Karlberg E.O."/>
            <person name="Legault B.-A."/>
            <person name="Ardell D.H."/>
            <person name="Canbaeck B."/>
            <person name="Eriksson A.-S."/>
            <person name="Naeslund A.K."/>
            <person name="Handley S.A."/>
            <person name="Huvet M."/>
            <person name="La Scola B."/>
            <person name="Holmberg M."/>
            <person name="Andersson S.G.E."/>
        </authorList>
    </citation>
    <scope>NUCLEOTIDE SEQUENCE [LARGE SCALE GENOMIC DNA]</scope>
    <source>
        <strain>ATCC 49882 / DSM 28221 / CCUG 30454 / Houston 1</strain>
    </source>
</reference>
<protein>
    <recommendedName>
        <fullName evidence="1">Phosphate acyltransferase</fullName>
        <ecNumber evidence="1">2.3.1.274</ecNumber>
    </recommendedName>
    <alternativeName>
        <fullName evidence="1">Acyl-ACP phosphotransacylase</fullName>
    </alternativeName>
    <alternativeName>
        <fullName evidence="1">Acyl-[acyl-carrier-protein]--phosphate acyltransferase</fullName>
    </alternativeName>
    <alternativeName>
        <fullName evidence="1">Phosphate-acyl-ACP acyltransferase</fullName>
    </alternativeName>
</protein>
<name>PLSX_BARHE</name>
<organism>
    <name type="scientific">Bartonella henselae (strain ATCC 49882 / DSM 28221 / CCUG 30454 / Houston 1)</name>
    <name type="common">Rochalimaea henselae</name>
    <dbReference type="NCBI Taxonomy" id="283166"/>
    <lineage>
        <taxon>Bacteria</taxon>
        <taxon>Pseudomonadati</taxon>
        <taxon>Pseudomonadota</taxon>
        <taxon>Alphaproteobacteria</taxon>
        <taxon>Hyphomicrobiales</taxon>
        <taxon>Bartonellaceae</taxon>
        <taxon>Bartonella</taxon>
    </lineage>
</organism>
<sequence>MIRISIDVMGGDYGPEATIAGAARVTEYLPNIYFLFYGLEETVKPVLKKYPCLASISCFCPTESYTRMDEKPSQALRNGRGKSSMWHAIEAVKNGEADVCISAGNTGALMAMSYFCLKMMAEAERPGIAGIWPTLRSESIVLDIGATIGASANQLVDFAVMGAGMFRALYHTEKPSVGLLNVGVEEVKGLYAIKKAGMILREVQLEGLEYKGFVEGNDIGKGTVDVVVTEGFSGNIALKTAEGTARQIGEILNSAMRSSFFSSLGYFLSRGAFRTLKHKMDPDRVNGGVLLGLNGIVIKSHGSANADGFASAIRIGYTMVHNGLLKKITADLRRFHQNKQTLFYKEDKATENEKII</sequence>
<evidence type="ECO:0000255" key="1">
    <source>
        <dbReference type="HAMAP-Rule" id="MF_00019"/>
    </source>
</evidence>
<keyword id="KW-0963">Cytoplasm</keyword>
<keyword id="KW-0444">Lipid biosynthesis</keyword>
<keyword id="KW-0443">Lipid metabolism</keyword>
<keyword id="KW-0594">Phospholipid biosynthesis</keyword>
<keyword id="KW-1208">Phospholipid metabolism</keyword>
<keyword id="KW-0808">Transferase</keyword>
<dbReference type="EC" id="2.3.1.274" evidence="1"/>
<dbReference type="EMBL" id="BX897699">
    <property type="protein sequence ID" value="CAF27563.1"/>
    <property type="molecule type" value="Genomic_DNA"/>
</dbReference>
<dbReference type="RefSeq" id="WP_011180664.1">
    <property type="nucleotide sequence ID" value="NZ_LRIJ02000001.1"/>
</dbReference>
<dbReference type="SMR" id="Q6G3K5"/>
<dbReference type="PaxDb" id="283166-BH07620"/>
<dbReference type="EnsemblBacteria" id="CAF27563">
    <property type="protein sequence ID" value="CAF27563"/>
    <property type="gene ID" value="BH07620"/>
</dbReference>
<dbReference type="GeneID" id="92985567"/>
<dbReference type="KEGG" id="bhe:BH07620"/>
<dbReference type="eggNOG" id="COG0416">
    <property type="taxonomic scope" value="Bacteria"/>
</dbReference>
<dbReference type="OrthoDB" id="9806408at2"/>
<dbReference type="UniPathway" id="UPA00085"/>
<dbReference type="Proteomes" id="UP000000421">
    <property type="component" value="Chromosome"/>
</dbReference>
<dbReference type="GO" id="GO:0005737">
    <property type="term" value="C:cytoplasm"/>
    <property type="evidence" value="ECO:0007669"/>
    <property type="project" value="UniProtKB-SubCell"/>
</dbReference>
<dbReference type="GO" id="GO:0043811">
    <property type="term" value="F:phosphate:acyl-[acyl carrier protein] acyltransferase activity"/>
    <property type="evidence" value="ECO:0007669"/>
    <property type="project" value="UniProtKB-UniRule"/>
</dbReference>
<dbReference type="GO" id="GO:0006633">
    <property type="term" value="P:fatty acid biosynthetic process"/>
    <property type="evidence" value="ECO:0007669"/>
    <property type="project" value="UniProtKB-UniRule"/>
</dbReference>
<dbReference type="GO" id="GO:0008654">
    <property type="term" value="P:phospholipid biosynthetic process"/>
    <property type="evidence" value="ECO:0007669"/>
    <property type="project" value="UniProtKB-KW"/>
</dbReference>
<dbReference type="Gene3D" id="3.40.718.10">
    <property type="entry name" value="Isopropylmalate Dehydrogenase"/>
    <property type="match status" value="1"/>
</dbReference>
<dbReference type="HAMAP" id="MF_00019">
    <property type="entry name" value="PlsX"/>
    <property type="match status" value="1"/>
</dbReference>
<dbReference type="InterPro" id="IPR003664">
    <property type="entry name" value="FA_synthesis"/>
</dbReference>
<dbReference type="InterPro" id="IPR012281">
    <property type="entry name" value="Phospholipid_synth_PlsX-like"/>
</dbReference>
<dbReference type="NCBIfam" id="TIGR00182">
    <property type="entry name" value="plsX"/>
    <property type="match status" value="1"/>
</dbReference>
<dbReference type="PANTHER" id="PTHR30100">
    <property type="entry name" value="FATTY ACID/PHOSPHOLIPID SYNTHESIS PROTEIN PLSX"/>
    <property type="match status" value="1"/>
</dbReference>
<dbReference type="PANTHER" id="PTHR30100:SF1">
    <property type="entry name" value="PHOSPHATE ACYLTRANSFERASE"/>
    <property type="match status" value="1"/>
</dbReference>
<dbReference type="Pfam" id="PF02504">
    <property type="entry name" value="FA_synthesis"/>
    <property type="match status" value="1"/>
</dbReference>
<dbReference type="PIRSF" id="PIRSF002465">
    <property type="entry name" value="Phsphlp_syn_PlsX"/>
    <property type="match status" value="1"/>
</dbReference>
<dbReference type="SUPFAM" id="SSF53659">
    <property type="entry name" value="Isocitrate/Isopropylmalate dehydrogenase-like"/>
    <property type="match status" value="1"/>
</dbReference>